<reference key="1">
    <citation type="journal article" date="2001" name="Curr. Genet.">
        <title>A type 2A protein phosphatase gene from Aspergillus nidulans is involved in hyphal morphogenesis.</title>
        <authorList>
            <person name="Kosmidou E."/>
            <person name="Lunness P."/>
            <person name="Doonan J.H."/>
        </authorList>
    </citation>
    <scope>NUCLEOTIDE SEQUENCE [GENOMIC DNA]</scope>
</reference>
<reference key="2">
    <citation type="journal article" date="2005" name="Nature">
        <title>Sequencing of Aspergillus nidulans and comparative analysis with A. fumigatus and A. oryzae.</title>
        <authorList>
            <person name="Galagan J.E."/>
            <person name="Calvo S.E."/>
            <person name="Cuomo C."/>
            <person name="Ma L.-J."/>
            <person name="Wortman J.R."/>
            <person name="Batzoglou S."/>
            <person name="Lee S.-I."/>
            <person name="Bastuerkmen M."/>
            <person name="Spevak C.C."/>
            <person name="Clutterbuck J."/>
            <person name="Kapitonov V."/>
            <person name="Jurka J."/>
            <person name="Scazzocchio C."/>
            <person name="Farman M.L."/>
            <person name="Butler J."/>
            <person name="Purcell S."/>
            <person name="Harris S."/>
            <person name="Braus G.H."/>
            <person name="Draht O."/>
            <person name="Busch S."/>
            <person name="D'Enfert C."/>
            <person name="Bouchier C."/>
            <person name="Goldman G.H."/>
            <person name="Bell-Pedersen D."/>
            <person name="Griffiths-Jones S."/>
            <person name="Doonan J.H."/>
            <person name="Yu J."/>
            <person name="Vienken K."/>
            <person name="Pain A."/>
            <person name="Freitag M."/>
            <person name="Selker E.U."/>
            <person name="Archer D.B."/>
            <person name="Penalva M.A."/>
            <person name="Oakley B.R."/>
            <person name="Momany M."/>
            <person name="Tanaka T."/>
            <person name="Kumagai T."/>
            <person name="Asai K."/>
            <person name="Machida M."/>
            <person name="Nierman W.C."/>
            <person name="Denning D.W."/>
            <person name="Caddick M.X."/>
            <person name="Hynes M."/>
            <person name="Paoletti M."/>
            <person name="Fischer R."/>
            <person name="Miller B.L."/>
            <person name="Dyer P.S."/>
            <person name="Sachs M.S."/>
            <person name="Osmani S.A."/>
            <person name="Birren B.W."/>
        </authorList>
    </citation>
    <scope>NUCLEOTIDE SEQUENCE [LARGE SCALE GENOMIC DNA]</scope>
    <source>
        <strain>FGSC A4 / ATCC 38163 / CBS 112.46 / NRRL 194 / M139</strain>
    </source>
</reference>
<reference key="3">
    <citation type="journal article" date="2009" name="Fungal Genet. Biol.">
        <title>The 2008 update of the Aspergillus nidulans genome annotation: a community effort.</title>
        <authorList>
            <person name="Wortman J.R."/>
            <person name="Gilsenan J.M."/>
            <person name="Joardar V."/>
            <person name="Deegan J."/>
            <person name="Clutterbuck J."/>
            <person name="Andersen M.R."/>
            <person name="Archer D."/>
            <person name="Bencina M."/>
            <person name="Braus G."/>
            <person name="Coutinho P."/>
            <person name="von Dohren H."/>
            <person name="Doonan J."/>
            <person name="Driessen A.J."/>
            <person name="Durek P."/>
            <person name="Espeso E."/>
            <person name="Fekete E."/>
            <person name="Flipphi M."/>
            <person name="Estrada C.G."/>
            <person name="Geysens S."/>
            <person name="Goldman G."/>
            <person name="de Groot P.W."/>
            <person name="Hansen K."/>
            <person name="Harris S.D."/>
            <person name="Heinekamp T."/>
            <person name="Helmstaedt K."/>
            <person name="Henrissat B."/>
            <person name="Hofmann G."/>
            <person name="Homan T."/>
            <person name="Horio T."/>
            <person name="Horiuchi H."/>
            <person name="James S."/>
            <person name="Jones M."/>
            <person name="Karaffa L."/>
            <person name="Karanyi Z."/>
            <person name="Kato M."/>
            <person name="Keller N."/>
            <person name="Kelly D.E."/>
            <person name="Kiel J.A."/>
            <person name="Kim J.M."/>
            <person name="van der Klei I.J."/>
            <person name="Klis F.M."/>
            <person name="Kovalchuk A."/>
            <person name="Krasevec N."/>
            <person name="Kubicek C.P."/>
            <person name="Liu B."/>
            <person name="Maccabe A."/>
            <person name="Meyer V."/>
            <person name="Mirabito P."/>
            <person name="Miskei M."/>
            <person name="Mos M."/>
            <person name="Mullins J."/>
            <person name="Nelson D.R."/>
            <person name="Nielsen J."/>
            <person name="Oakley B.R."/>
            <person name="Osmani S.A."/>
            <person name="Pakula T."/>
            <person name="Paszewski A."/>
            <person name="Paulsen I."/>
            <person name="Pilsyk S."/>
            <person name="Pocsi I."/>
            <person name="Punt P.J."/>
            <person name="Ram A.F."/>
            <person name="Ren Q."/>
            <person name="Robellet X."/>
            <person name="Robson G."/>
            <person name="Seiboth B."/>
            <person name="van Solingen P."/>
            <person name="Specht T."/>
            <person name="Sun J."/>
            <person name="Taheri-Talesh N."/>
            <person name="Takeshita N."/>
            <person name="Ussery D."/>
            <person name="vanKuyk P.A."/>
            <person name="Visser H."/>
            <person name="van de Vondervoort P.J."/>
            <person name="de Vries R.P."/>
            <person name="Walton J."/>
            <person name="Xiang X."/>
            <person name="Xiong Y."/>
            <person name="Zeng A.P."/>
            <person name="Brandt B.W."/>
            <person name="Cornell M.J."/>
            <person name="van den Hondel C.A."/>
            <person name="Visser J."/>
            <person name="Oliver S.G."/>
            <person name="Turner G."/>
        </authorList>
    </citation>
    <scope>GENOME REANNOTATION</scope>
    <source>
        <strain>FGSC A4 / ATCC 38163 / CBS 112.46 / NRRL 194 / M139</strain>
    </source>
</reference>
<dbReference type="EC" id="3.1.3.16"/>
<dbReference type="EMBL" id="AJ291510">
    <property type="protein sequence ID" value="CAC13980.1"/>
    <property type="molecule type" value="Genomic_DNA"/>
</dbReference>
<dbReference type="EMBL" id="AACD01000108">
    <property type="protein sequence ID" value="EAA58413.1"/>
    <property type="molecule type" value="Genomic_DNA"/>
</dbReference>
<dbReference type="EMBL" id="BN001301">
    <property type="protein sequence ID" value="CBF69560.1"/>
    <property type="molecule type" value="Genomic_DNA"/>
</dbReference>
<dbReference type="RefSeq" id="XP_663995.1">
    <property type="nucleotide sequence ID" value="XM_658903.1"/>
</dbReference>
<dbReference type="SMR" id="Q9HFQ2"/>
<dbReference type="FunCoup" id="Q9HFQ2">
    <property type="interactions" value="1027"/>
</dbReference>
<dbReference type="STRING" id="227321.Q9HFQ2"/>
<dbReference type="EnsemblFungi" id="CBF69560">
    <property type="protein sequence ID" value="CBF69560"/>
    <property type="gene ID" value="ANIA_06391"/>
</dbReference>
<dbReference type="KEGG" id="ani:ANIA_06391"/>
<dbReference type="VEuPathDB" id="FungiDB:AN6391"/>
<dbReference type="eggNOG" id="KOG0371">
    <property type="taxonomic scope" value="Eukaryota"/>
</dbReference>
<dbReference type="HOGENOM" id="CLU_004962_0_5_1"/>
<dbReference type="InParanoid" id="Q9HFQ2"/>
<dbReference type="OMA" id="EGYNWGQ"/>
<dbReference type="OrthoDB" id="1930084at2759"/>
<dbReference type="Proteomes" id="UP000000560">
    <property type="component" value="Chromosome I"/>
</dbReference>
<dbReference type="GO" id="GO:0005829">
    <property type="term" value="C:cytosol"/>
    <property type="evidence" value="ECO:0000318"/>
    <property type="project" value="GO_Central"/>
</dbReference>
<dbReference type="GO" id="GO:0046872">
    <property type="term" value="F:metal ion binding"/>
    <property type="evidence" value="ECO:0007669"/>
    <property type="project" value="UniProtKB-KW"/>
</dbReference>
<dbReference type="GO" id="GO:0004722">
    <property type="term" value="F:protein serine/threonine phosphatase activity"/>
    <property type="evidence" value="ECO:0000318"/>
    <property type="project" value="GO_Central"/>
</dbReference>
<dbReference type="GO" id="GO:0000278">
    <property type="term" value="P:mitotic cell cycle"/>
    <property type="evidence" value="ECO:0000318"/>
    <property type="project" value="GO_Central"/>
</dbReference>
<dbReference type="CDD" id="cd07415">
    <property type="entry name" value="MPP_PP2A_PP4_PP6"/>
    <property type="match status" value="1"/>
</dbReference>
<dbReference type="FunFam" id="3.60.21.10:FF:000003">
    <property type="entry name" value="Serine/threonine-protein phosphatase"/>
    <property type="match status" value="1"/>
</dbReference>
<dbReference type="Gene3D" id="3.60.21.10">
    <property type="match status" value="1"/>
</dbReference>
<dbReference type="InterPro" id="IPR004843">
    <property type="entry name" value="Calcineurin-like_PHP_ApaH"/>
</dbReference>
<dbReference type="InterPro" id="IPR029052">
    <property type="entry name" value="Metallo-depent_PP-like"/>
</dbReference>
<dbReference type="InterPro" id="IPR047129">
    <property type="entry name" value="PPA2-like"/>
</dbReference>
<dbReference type="InterPro" id="IPR006186">
    <property type="entry name" value="Ser/Thr-sp_prot-phosphatase"/>
</dbReference>
<dbReference type="PANTHER" id="PTHR45619">
    <property type="entry name" value="SERINE/THREONINE-PROTEIN PHOSPHATASE PP2A-RELATED"/>
    <property type="match status" value="1"/>
</dbReference>
<dbReference type="Pfam" id="PF00149">
    <property type="entry name" value="Metallophos"/>
    <property type="match status" value="1"/>
</dbReference>
<dbReference type="PRINTS" id="PR00114">
    <property type="entry name" value="STPHPHTASE"/>
</dbReference>
<dbReference type="SMART" id="SM00156">
    <property type="entry name" value="PP2Ac"/>
    <property type="match status" value="1"/>
</dbReference>
<dbReference type="SUPFAM" id="SSF56300">
    <property type="entry name" value="Metallo-dependent phosphatases"/>
    <property type="match status" value="1"/>
</dbReference>
<dbReference type="PROSITE" id="PS00125">
    <property type="entry name" value="SER_THR_PHOSPHATASE"/>
    <property type="match status" value="1"/>
</dbReference>
<accession>Q9HFQ2</accession>
<accession>C8V0P5</accession>
<accession>Q5AZ89</accession>
<sequence length="329" mass="37665">MDNNMEIDAARSPEPHHLSPTTDPGSIPTLDGWIESLMTCKQLAEEDVRRLCDRAREVLQEESNVQPVKCPVTVCGDIHGQFHDLMELFRIGGPNPDTNYLFMGDYVDRGYYSVETVTLLVCLKIRYPQRITILRGNHESRQITQVYGFYDECLRKYGNANVWKYFTDLFDYLPLTALIENQIFCLHGGLSPSIDTLDNIRSLDRIQEVPHEGPMCDLLWSDPDDRCGWGISPRGAGYTFGQDISEAFNHNNGLTLVARAHQLVMEGYNWSQDRNVVTIFSAPNYCYRCGNQAAIMEIDEHLKYTFLQFDPCPRAGEPMVSRRTPDYFL</sequence>
<evidence type="ECO:0000250" key="1"/>
<evidence type="ECO:0000256" key="2">
    <source>
        <dbReference type="SAM" id="MobiDB-lite"/>
    </source>
</evidence>
<evidence type="ECO:0000305" key="3"/>
<gene>
    <name type="primary">pphA</name>
    <name type="ORF">AN6391</name>
</gene>
<keyword id="KW-0378">Hydrolase</keyword>
<keyword id="KW-0464">Manganese</keyword>
<keyword id="KW-0479">Metal-binding</keyword>
<keyword id="KW-0488">Methylation</keyword>
<keyword id="KW-0904">Protein phosphatase</keyword>
<keyword id="KW-1185">Reference proteome</keyword>
<comment type="function">
    <text>Involved in hyphal morphogenesis.</text>
</comment>
<comment type="catalytic activity">
    <reaction>
        <text>O-phospho-L-seryl-[protein] + H2O = L-seryl-[protein] + phosphate</text>
        <dbReference type="Rhea" id="RHEA:20629"/>
        <dbReference type="Rhea" id="RHEA-COMP:9863"/>
        <dbReference type="Rhea" id="RHEA-COMP:11604"/>
        <dbReference type="ChEBI" id="CHEBI:15377"/>
        <dbReference type="ChEBI" id="CHEBI:29999"/>
        <dbReference type="ChEBI" id="CHEBI:43474"/>
        <dbReference type="ChEBI" id="CHEBI:83421"/>
        <dbReference type="EC" id="3.1.3.16"/>
    </reaction>
</comment>
<comment type="catalytic activity">
    <reaction>
        <text>O-phospho-L-threonyl-[protein] + H2O = L-threonyl-[protein] + phosphate</text>
        <dbReference type="Rhea" id="RHEA:47004"/>
        <dbReference type="Rhea" id="RHEA-COMP:11060"/>
        <dbReference type="Rhea" id="RHEA-COMP:11605"/>
        <dbReference type="ChEBI" id="CHEBI:15377"/>
        <dbReference type="ChEBI" id="CHEBI:30013"/>
        <dbReference type="ChEBI" id="CHEBI:43474"/>
        <dbReference type="ChEBI" id="CHEBI:61977"/>
        <dbReference type="EC" id="3.1.3.16"/>
    </reaction>
</comment>
<comment type="cofactor">
    <cofactor evidence="1">
        <name>Mn(2+)</name>
        <dbReference type="ChEBI" id="CHEBI:29035"/>
    </cofactor>
    <text evidence="1">Binds 2 manganese ions per subunit.</text>
</comment>
<comment type="similarity">
    <text evidence="3">Belongs to the PPP phosphatase family. PP-2A subfamily.</text>
</comment>
<feature type="chain" id="PRO_0000058868" description="Serine/threonine-protein phosphatase PP2A catalytic subunit">
    <location>
        <begin position="1"/>
        <end position="329"/>
    </location>
</feature>
<feature type="region of interest" description="Disordered" evidence="2">
    <location>
        <begin position="1"/>
        <end position="25"/>
    </location>
</feature>
<feature type="compositionally biased region" description="Basic and acidic residues" evidence="2">
    <location>
        <begin position="8"/>
        <end position="17"/>
    </location>
</feature>
<feature type="active site" description="Proton donor" evidence="1">
    <location>
        <position position="138"/>
    </location>
</feature>
<feature type="binding site" evidence="1">
    <location>
        <position position="77"/>
    </location>
    <ligand>
        <name>Mn(2+)</name>
        <dbReference type="ChEBI" id="CHEBI:29035"/>
        <label>1</label>
    </ligand>
</feature>
<feature type="binding site" evidence="1">
    <location>
        <position position="79"/>
    </location>
    <ligand>
        <name>Mn(2+)</name>
        <dbReference type="ChEBI" id="CHEBI:29035"/>
        <label>1</label>
    </ligand>
</feature>
<feature type="binding site" evidence="1">
    <location>
        <position position="105"/>
    </location>
    <ligand>
        <name>Mn(2+)</name>
        <dbReference type="ChEBI" id="CHEBI:29035"/>
        <label>1</label>
    </ligand>
</feature>
<feature type="binding site" evidence="1">
    <location>
        <position position="105"/>
    </location>
    <ligand>
        <name>Mn(2+)</name>
        <dbReference type="ChEBI" id="CHEBI:29035"/>
        <label>2</label>
    </ligand>
</feature>
<feature type="binding site" evidence="1">
    <location>
        <position position="137"/>
    </location>
    <ligand>
        <name>Mn(2+)</name>
        <dbReference type="ChEBI" id="CHEBI:29035"/>
        <label>2</label>
    </ligand>
</feature>
<feature type="binding site" evidence="1">
    <location>
        <position position="187"/>
    </location>
    <ligand>
        <name>Mn(2+)</name>
        <dbReference type="ChEBI" id="CHEBI:29035"/>
        <label>2</label>
    </ligand>
</feature>
<feature type="binding site" evidence="1">
    <location>
        <position position="261"/>
    </location>
    <ligand>
        <name>Mn(2+)</name>
        <dbReference type="ChEBI" id="CHEBI:29035"/>
        <label>2</label>
    </ligand>
</feature>
<feature type="modified residue" description="Leucine methyl ester" evidence="1">
    <location>
        <position position="329"/>
    </location>
</feature>
<feature type="sequence conflict" description="In Ref. 1; CAC13980." evidence="3" ref="1">
    <original>I</original>
    <variation>T</variation>
    <location>
        <position position="133"/>
    </location>
</feature>
<organism>
    <name type="scientific">Emericella nidulans (strain FGSC A4 / ATCC 38163 / CBS 112.46 / NRRL 194 / M139)</name>
    <name type="common">Aspergillus nidulans</name>
    <dbReference type="NCBI Taxonomy" id="227321"/>
    <lineage>
        <taxon>Eukaryota</taxon>
        <taxon>Fungi</taxon>
        <taxon>Dikarya</taxon>
        <taxon>Ascomycota</taxon>
        <taxon>Pezizomycotina</taxon>
        <taxon>Eurotiomycetes</taxon>
        <taxon>Eurotiomycetidae</taxon>
        <taxon>Eurotiales</taxon>
        <taxon>Aspergillaceae</taxon>
        <taxon>Aspergillus</taxon>
        <taxon>Aspergillus subgen. Nidulantes</taxon>
    </lineage>
</organism>
<name>PP2A1_EMENI</name>
<proteinExistence type="inferred from homology"/>
<protein>
    <recommendedName>
        <fullName>Serine/threonine-protein phosphatase PP2A catalytic subunit</fullName>
        <shortName>Protein phosphatase 2a</shortName>
        <ecNumber>3.1.3.16</ecNumber>
    </recommendedName>
</protein>